<protein>
    <recommendedName>
        <fullName evidence="1">Small ribosomal subunit protein uS14</fullName>
    </recommendedName>
    <alternativeName>
        <fullName evidence="2">30S ribosomal protein S14</fullName>
    </alternativeName>
</protein>
<reference key="1">
    <citation type="journal article" date="2005" name="Nat. Biotechnol.">
        <title>The genome sequence of the ethanologenic bacterium Zymomonas mobilis ZM4.</title>
        <authorList>
            <person name="Seo J.-S."/>
            <person name="Chong H."/>
            <person name="Park H.S."/>
            <person name="Yoon K.-O."/>
            <person name="Jung C."/>
            <person name="Kim J.J."/>
            <person name="Hong J.H."/>
            <person name="Kim H."/>
            <person name="Kim J.-H."/>
            <person name="Kil J.-I."/>
            <person name="Park C.J."/>
            <person name="Oh H.-M."/>
            <person name="Lee J.-S."/>
            <person name="Jin S.-J."/>
            <person name="Um H.-W."/>
            <person name="Lee H.-J."/>
            <person name="Oh S.-J."/>
            <person name="Kim J.Y."/>
            <person name="Kang H.L."/>
            <person name="Lee S.Y."/>
            <person name="Lee K.J."/>
            <person name="Kang H.S."/>
        </authorList>
    </citation>
    <scope>NUCLEOTIDE SEQUENCE [LARGE SCALE GENOMIC DNA]</scope>
    <source>
        <strain>ATCC 31821 / ZM4 / CP4</strain>
    </source>
</reference>
<comment type="function">
    <text evidence="1">Binds 16S rRNA, required for the assembly of 30S particles and may also be responsible for determining the conformation of the 16S rRNA at the A site.</text>
</comment>
<comment type="subunit">
    <text evidence="1">Part of the 30S ribosomal subunit. Contacts proteins S3 and S10.</text>
</comment>
<comment type="similarity">
    <text evidence="1">Belongs to the universal ribosomal protein uS14 family.</text>
</comment>
<organism>
    <name type="scientific">Zymomonas mobilis subsp. mobilis (strain ATCC 31821 / ZM4 / CP4)</name>
    <dbReference type="NCBI Taxonomy" id="264203"/>
    <lineage>
        <taxon>Bacteria</taxon>
        <taxon>Pseudomonadati</taxon>
        <taxon>Pseudomonadota</taxon>
        <taxon>Alphaproteobacteria</taxon>
        <taxon>Sphingomonadales</taxon>
        <taxon>Zymomonadaceae</taxon>
        <taxon>Zymomonas</taxon>
    </lineage>
</organism>
<proteinExistence type="inferred from homology"/>
<gene>
    <name evidence="1" type="primary">rpsN</name>
    <name type="ordered locus">ZMO0529</name>
</gene>
<dbReference type="EMBL" id="AE008692">
    <property type="protein sequence ID" value="AAV89153.1"/>
    <property type="molecule type" value="Genomic_DNA"/>
</dbReference>
<dbReference type="RefSeq" id="WP_011240436.1">
    <property type="nucleotide sequence ID" value="NZ_CP035711.1"/>
</dbReference>
<dbReference type="SMR" id="Q5NQ52"/>
<dbReference type="STRING" id="264203.ZMO0529"/>
<dbReference type="GeneID" id="79904279"/>
<dbReference type="KEGG" id="zmo:ZMO0529"/>
<dbReference type="eggNOG" id="COG0199">
    <property type="taxonomic scope" value="Bacteria"/>
</dbReference>
<dbReference type="HOGENOM" id="CLU_139869_0_1_5"/>
<dbReference type="Proteomes" id="UP000001173">
    <property type="component" value="Chromosome"/>
</dbReference>
<dbReference type="GO" id="GO:0005737">
    <property type="term" value="C:cytoplasm"/>
    <property type="evidence" value="ECO:0007669"/>
    <property type="project" value="UniProtKB-ARBA"/>
</dbReference>
<dbReference type="GO" id="GO:0015935">
    <property type="term" value="C:small ribosomal subunit"/>
    <property type="evidence" value="ECO:0007669"/>
    <property type="project" value="TreeGrafter"/>
</dbReference>
<dbReference type="GO" id="GO:0019843">
    <property type="term" value="F:rRNA binding"/>
    <property type="evidence" value="ECO:0007669"/>
    <property type="project" value="UniProtKB-UniRule"/>
</dbReference>
<dbReference type="GO" id="GO:0003735">
    <property type="term" value="F:structural constituent of ribosome"/>
    <property type="evidence" value="ECO:0007669"/>
    <property type="project" value="InterPro"/>
</dbReference>
<dbReference type="GO" id="GO:0006412">
    <property type="term" value="P:translation"/>
    <property type="evidence" value="ECO:0007669"/>
    <property type="project" value="UniProtKB-UniRule"/>
</dbReference>
<dbReference type="FunFam" id="1.10.287.1480:FF:000001">
    <property type="entry name" value="30S ribosomal protein S14"/>
    <property type="match status" value="1"/>
</dbReference>
<dbReference type="Gene3D" id="1.10.287.1480">
    <property type="match status" value="1"/>
</dbReference>
<dbReference type="HAMAP" id="MF_00537">
    <property type="entry name" value="Ribosomal_uS14_1"/>
    <property type="match status" value="1"/>
</dbReference>
<dbReference type="InterPro" id="IPR001209">
    <property type="entry name" value="Ribosomal_uS14"/>
</dbReference>
<dbReference type="InterPro" id="IPR023036">
    <property type="entry name" value="Ribosomal_uS14_bac/plastid"/>
</dbReference>
<dbReference type="InterPro" id="IPR018271">
    <property type="entry name" value="Ribosomal_uS14_CS"/>
</dbReference>
<dbReference type="NCBIfam" id="NF006477">
    <property type="entry name" value="PRK08881.1"/>
    <property type="match status" value="1"/>
</dbReference>
<dbReference type="PANTHER" id="PTHR19836">
    <property type="entry name" value="30S RIBOSOMAL PROTEIN S14"/>
    <property type="match status" value="1"/>
</dbReference>
<dbReference type="PANTHER" id="PTHR19836:SF19">
    <property type="entry name" value="SMALL RIBOSOMAL SUBUNIT PROTEIN US14M"/>
    <property type="match status" value="1"/>
</dbReference>
<dbReference type="Pfam" id="PF00253">
    <property type="entry name" value="Ribosomal_S14"/>
    <property type="match status" value="1"/>
</dbReference>
<dbReference type="SUPFAM" id="SSF57716">
    <property type="entry name" value="Glucocorticoid receptor-like (DNA-binding domain)"/>
    <property type="match status" value="1"/>
</dbReference>
<dbReference type="PROSITE" id="PS00527">
    <property type="entry name" value="RIBOSOMAL_S14"/>
    <property type="match status" value="1"/>
</dbReference>
<name>RS14_ZYMMO</name>
<accession>Q5NQ52</accession>
<feature type="chain" id="PRO_1000128658" description="Small ribosomal subunit protein uS14">
    <location>
        <begin position="1"/>
        <end position="101"/>
    </location>
</feature>
<evidence type="ECO:0000255" key="1">
    <source>
        <dbReference type="HAMAP-Rule" id="MF_00537"/>
    </source>
</evidence>
<evidence type="ECO:0000305" key="2"/>
<sequence>MAKLSSINKNEKRKKMAKAYAGKYSRLKAAANDKSLDETDRLVARLKMAELPRNANPTRVRNRCALTGRPRGYYRKFQLCRIQLRDLANKGLIPGVTKSSW</sequence>
<keyword id="KW-1185">Reference proteome</keyword>
<keyword id="KW-0687">Ribonucleoprotein</keyword>
<keyword id="KW-0689">Ribosomal protein</keyword>
<keyword id="KW-0694">RNA-binding</keyword>
<keyword id="KW-0699">rRNA-binding</keyword>